<dbReference type="EMBL" id="CP000450">
    <property type="protein sequence ID" value="ABI60646.1"/>
    <property type="molecule type" value="Genomic_DNA"/>
</dbReference>
<dbReference type="RefSeq" id="WP_011635411.1">
    <property type="nucleotide sequence ID" value="NC_008344.1"/>
</dbReference>
<dbReference type="SMR" id="Q0ADD6"/>
<dbReference type="STRING" id="335283.Neut_2437"/>
<dbReference type="KEGG" id="net:Neut_2437"/>
<dbReference type="eggNOG" id="COG0445">
    <property type="taxonomic scope" value="Bacteria"/>
</dbReference>
<dbReference type="HOGENOM" id="CLU_007831_2_2_4"/>
<dbReference type="OrthoDB" id="9815560at2"/>
<dbReference type="Proteomes" id="UP000001966">
    <property type="component" value="Chromosome"/>
</dbReference>
<dbReference type="GO" id="GO:0005829">
    <property type="term" value="C:cytosol"/>
    <property type="evidence" value="ECO:0007669"/>
    <property type="project" value="TreeGrafter"/>
</dbReference>
<dbReference type="GO" id="GO:0050660">
    <property type="term" value="F:flavin adenine dinucleotide binding"/>
    <property type="evidence" value="ECO:0007669"/>
    <property type="project" value="UniProtKB-UniRule"/>
</dbReference>
<dbReference type="GO" id="GO:0030488">
    <property type="term" value="P:tRNA methylation"/>
    <property type="evidence" value="ECO:0007669"/>
    <property type="project" value="TreeGrafter"/>
</dbReference>
<dbReference type="GO" id="GO:0002098">
    <property type="term" value="P:tRNA wobble uridine modification"/>
    <property type="evidence" value="ECO:0007669"/>
    <property type="project" value="InterPro"/>
</dbReference>
<dbReference type="FunFam" id="1.10.10.1800:FF:000001">
    <property type="entry name" value="tRNA uridine 5-carboxymethylaminomethyl modification enzyme MnmG"/>
    <property type="match status" value="1"/>
</dbReference>
<dbReference type="FunFam" id="1.10.150.570:FF:000001">
    <property type="entry name" value="tRNA uridine 5-carboxymethylaminomethyl modification enzyme MnmG"/>
    <property type="match status" value="1"/>
</dbReference>
<dbReference type="FunFam" id="3.50.50.60:FF:000002">
    <property type="entry name" value="tRNA uridine 5-carboxymethylaminomethyl modification enzyme MnmG"/>
    <property type="match status" value="1"/>
</dbReference>
<dbReference type="FunFam" id="3.50.50.60:FF:000010">
    <property type="entry name" value="tRNA uridine 5-carboxymethylaminomethyl modification enzyme MnmG"/>
    <property type="match status" value="1"/>
</dbReference>
<dbReference type="Gene3D" id="3.50.50.60">
    <property type="entry name" value="FAD/NAD(P)-binding domain"/>
    <property type="match status" value="2"/>
</dbReference>
<dbReference type="Gene3D" id="1.10.150.570">
    <property type="entry name" value="GidA associated domain, C-terminal subdomain"/>
    <property type="match status" value="1"/>
</dbReference>
<dbReference type="Gene3D" id="1.10.10.1800">
    <property type="entry name" value="tRNA uridine 5-carboxymethylaminomethyl modification enzyme MnmG/GidA"/>
    <property type="match status" value="1"/>
</dbReference>
<dbReference type="HAMAP" id="MF_00129">
    <property type="entry name" value="MnmG_GidA"/>
    <property type="match status" value="1"/>
</dbReference>
<dbReference type="InterPro" id="IPR036188">
    <property type="entry name" value="FAD/NAD-bd_sf"/>
</dbReference>
<dbReference type="InterPro" id="IPR049312">
    <property type="entry name" value="GIDA_C_N"/>
</dbReference>
<dbReference type="InterPro" id="IPR004416">
    <property type="entry name" value="MnmG"/>
</dbReference>
<dbReference type="InterPro" id="IPR002218">
    <property type="entry name" value="MnmG-rel"/>
</dbReference>
<dbReference type="InterPro" id="IPR020595">
    <property type="entry name" value="MnmG-rel_CS"/>
</dbReference>
<dbReference type="InterPro" id="IPR026904">
    <property type="entry name" value="MnmG_C"/>
</dbReference>
<dbReference type="InterPro" id="IPR047001">
    <property type="entry name" value="MnmG_C_subdom"/>
</dbReference>
<dbReference type="InterPro" id="IPR044920">
    <property type="entry name" value="MnmG_C_subdom_sf"/>
</dbReference>
<dbReference type="InterPro" id="IPR040131">
    <property type="entry name" value="MnmG_N"/>
</dbReference>
<dbReference type="NCBIfam" id="TIGR00136">
    <property type="entry name" value="mnmG_gidA"/>
    <property type="match status" value="1"/>
</dbReference>
<dbReference type="PANTHER" id="PTHR11806">
    <property type="entry name" value="GLUCOSE INHIBITED DIVISION PROTEIN A"/>
    <property type="match status" value="1"/>
</dbReference>
<dbReference type="PANTHER" id="PTHR11806:SF0">
    <property type="entry name" value="PROTEIN MTO1 HOMOLOG, MITOCHONDRIAL"/>
    <property type="match status" value="1"/>
</dbReference>
<dbReference type="Pfam" id="PF01134">
    <property type="entry name" value="GIDA"/>
    <property type="match status" value="1"/>
</dbReference>
<dbReference type="Pfam" id="PF21680">
    <property type="entry name" value="GIDA_C_1st"/>
    <property type="match status" value="1"/>
</dbReference>
<dbReference type="Pfam" id="PF13932">
    <property type="entry name" value="SAM_GIDA_C"/>
    <property type="match status" value="1"/>
</dbReference>
<dbReference type="SMART" id="SM01228">
    <property type="entry name" value="GIDA_assoc_3"/>
    <property type="match status" value="1"/>
</dbReference>
<dbReference type="SUPFAM" id="SSF51905">
    <property type="entry name" value="FAD/NAD(P)-binding domain"/>
    <property type="match status" value="1"/>
</dbReference>
<dbReference type="PROSITE" id="PS01280">
    <property type="entry name" value="GIDA_1"/>
    <property type="match status" value="1"/>
</dbReference>
<dbReference type="PROSITE" id="PS01281">
    <property type="entry name" value="GIDA_2"/>
    <property type="match status" value="1"/>
</dbReference>
<proteinExistence type="inferred from homology"/>
<feature type="chain" id="PRO_1000016626" description="tRNA uridine 5-carboxymethylaminomethyl modification enzyme MnmG">
    <location>
        <begin position="1"/>
        <end position="641"/>
    </location>
</feature>
<feature type="binding site" evidence="1">
    <location>
        <begin position="13"/>
        <end position="18"/>
    </location>
    <ligand>
        <name>FAD</name>
        <dbReference type="ChEBI" id="CHEBI:57692"/>
    </ligand>
</feature>
<feature type="binding site" evidence="1">
    <location>
        <position position="125"/>
    </location>
    <ligand>
        <name>FAD</name>
        <dbReference type="ChEBI" id="CHEBI:57692"/>
    </ligand>
</feature>
<feature type="binding site" evidence="1">
    <location>
        <position position="180"/>
    </location>
    <ligand>
        <name>FAD</name>
        <dbReference type="ChEBI" id="CHEBI:57692"/>
    </ligand>
</feature>
<feature type="binding site" evidence="1">
    <location>
        <begin position="273"/>
        <end position="287"/>
    </location>
    <ligand>
        <name>NAD(+)</name>
        <dbReference type="ChEBI" id="CHEBI:57540"/>
    </ligand>
</feature>
<feature type="binding site" evidence="1">
    <location>
        <position position="370"/>
    </location>
    <ligand>
        <name>FAD</name>
        <dbReference type="ChEBI" id="CHEBI:57692"/>
    </ligand>
</feature>
<reference key="1">
    <citation type="journal article" date="2007" name="Environ. Microbiol.">
        <title>Whole-genome analysis of the ammonia-oxidizing bacterium, Nitrosomonas eutropha C91: implications for niche adaptation.</title>
        <authorList>
            <person name="Stein L.Y."/>
            <person name="Arp D.J."/>
            <person name="Berube P.M."/>
            <person name="Chain P.S."/>
            <person name="Hauser L."/>
            <person name="Jetten M.S."/>
            <person name="Klotz M.G."/>
            <person name="Larimer F.W."/>
            <person name="Norton J.M."/>
            <person name="Op den Camp H.J.M."/>
            <person name="Shin M."/>
            <person name="Wei X."/>
        </authorList>
    </citation>
    <scope>NUCLEOTIDE SEQUENCE [LARGE SCALE GENOMIC DNA]</scope>
    <source>
        <strain>DSM 101675 / C91 / Nm57</strain>
    </source>
</reference>
<sequence>MHFSRDFDIIVVGGGHAGTEAALAAARMGQKTLLLTQNLDTLGQMSCNPSIGGIGKGHLVKEIDALGGAMAAAIDEAGIQFRTLNSSKGPAVRATRAQADRVLYRQAIRKRLEAQPNLLILQSTVDDLLLLDDKITGVATHLGITFSARAVVLTVGTFLGGLAHVGDRNFQAGRAGDPASIRLAHRLREMNLSVGRLKTGTPPRIDARTIDFQFLREQPGDEPIPTFSFLGNTAQHPRQVSCWMTRTNEKTHEIIRAGLDHSPLYTGKIEGIGPRYCPSIEDKVVRFSDRDSHTVFLEPEGLETSEIYPNGISTSLSFEVQVELVRSIAGLENAHITRPGYAIEYDYFDPRALKRSLETKAIDGLFFAGQINGTTGYEEAAAQGLLAGLNASLKIKEQESWCPSRDEAYLGVLVDDLVTRGVTEPYRMFTSRAEFRLQLREDNADMRLTEAGHQFGLVDEKRWQIFAAKREAIETEKARLRRTWVPAGVLHKLQTLQTSDQSDDRSYSLYELLRRPGISYTELVSLSEVESSMIDGRIAQQLEIDVKYEGYVERQRQEVVRHTQHETMVLPKNLDYSTVRGLSNEVTQKLNQHQPETIGQAARISGITPAAISLLLVHLKRGMARQAAKQEETHESGKTVA</sequence>
<protein>
    <recommendedName>
        <fullName evidence="1">tRNA uridine 5-carboxymethylaminomethyl modification enzyme MnmG</fullName>
    </recommendedName>
    <alternativeName>
        <fullName evidence="1">Glucose-inhibited division protein A</fullName>
    </alternativeName>
</protein>
<evidence type="ECO:0000255" key="1">
    <source>
        <dbReference type="HAMAP-Rule" id="MF_00129"/>
    </source>
</evidence>
<accession>Q0ADD6</accession>
<comment type="function">
    <text evidence="1">NAD-binding protein involved in the addition of a carboxymethylaminomethyl (cmnm) group at the wobble position (U34) of certain tRNAs, forming tRNA-cmnm(5)s(2)U34.</text>
</comment>
<comment type="cofactor">
    <cofactor evidence="1">
        <name>FAD</name>
        <dbReference type="ChEBI" id="CHEBI:57692"/>
    </cofactor>
</comment>
<comment type="subunit">
    <text evidence="1">Homodimer. Heterotetramer of two MnmE and two MnmG subunits.</text>
</comment>
<comment type="subcellular location">
    <subcellularLocation>
        <location evidence="1">Cytoplasm</location>
    </subcellularLocation>
</comment>
<comment type="similarity">
    <text evidence="1">Belongs to the MnmG family.</text>
</comment>
<name>MNMG_NITEC</name>
<keyword id="KW-0963">Cytoplasm</keyword>
<keyword id="KW-0274">FAD</keyword>
<keyword id="KW-0285">Flavoprotein</keyword>
<keyword id="KW-0520">NAD</keyword>
<keyword id="KW-0819">tRNA processing</keyword>
<organism>
    <name type="scientific">Nitrosomonas eutropha (strain DSM 101675 / C91 / Nm57)</name>
    <dbReference type="NCBI Taxonomy" id="335283"/>
    <lineage>
        <taxon>Bacteria</taxon>
        <taxon>Pseudomonadati</taxon>
        <taxon>Pseudomonadota</taxon>
        <taxon>Betaproteobacteria</taxon>
        <taxon>Nitrosomonadales</taxon>
        <taxon>Nitrosomonadaceae</taxon>
        <taxon>Nitrosomonas</taxon>
    </lineage>
</organism>
<gene>
    <name evidence="1" type="primary">mnmG</name>
    <name evidence="1" type="synonym">gidA</name>
    <name type="ordered locus">Neut_2437</name>
</gene>